<accession>B8GXJ5</accession>
<evidence type="ECO:0000255" key="1">
    <source>
        <dbReference type="HAMAP-Rule" id="MF_01200"/>
    </source>
</evidence>
<organism>
    <name type="scientific">Caulobacter vibrioides (strain NA1000 / CB15N)</name>
    <name type="common">Caulobacter crescentus</name>
    <dbReference type="NCBI Taxonomy" id="565050"/>
    <lineage>
        <taxon>Bacteria</taxon>
        <taxon>Pseudomonadati</taxon>
        <taxon>Pseudomonadota</taxon>
        <taxon>Alphaproteobacteria</taxon>
        <taxon>Caulobacterales</taxon>
        <taxon>Caulobacteraceae</taxon>
        <taxon>Caulobacter</taxon>
    </lineage>
</organism>
<gene>
    <name evidence="1" type="primary">pyrF</name>
    <name type="ordered locus">CCNA_00104</name>
</gene>
<reference key="1">
    <citation type="journal article" date="2010" name="J. Bacteriol.">
        <title>The genetic basis of laboratory adaptation in Caulobacter crescentus.</title>
        <authorList>
            <person name="Marks M.E."/>
            <person name="Castro-Rojas C.M."/>
            <person name="Teiling C."/>
            <person name="Du L."/>
            <person name="Kapatral V."/>
            <person name="Walunas T.L."/>
            <person name="Crosson S."/>
        </authorList>
    </citation>
    <scope>NUCLEOTIDE SEQUENCE [LARGE SCALE GENOMIC DNA]</scope>
    <source>
        <strain>NA1000 / CB15N</strain>
    </source>
</reference>
<name>PYRF_CAUVN</name>
<keyword id="KW-0210">Decarboxylase</keyword>
<keyword id="KW-0456">Lyase</keyword>
<keyword id="KW-0665">Pyrimidine biosynthesis</keyword>
<keyword id="KW-1185">Reference proteome</keyword>
<sequence length="233" mass="24629">MTADPRLIVPLDLPTVDDARAMVERLGDAVSFYKIGLELLASDGMGLAHDLKASGKSIFLDWKLHDIGATVERSARVLATSGCDLLTVHAEPQVMQAAVKARGDSSLKILAVTVLTSLTDADLVEMGYAFTARDLVERRVRQALACGVDGIVSSPHEAALAREIANDAGQPEFLIVTPGVRPEWSAKNDQARAATPADALRAGATHLVCGRPITAANDPREAALKVVTEMAGI</sequence>
<proteinExistence type="inferred from homology"/>
<protein>
    <recommendedName>
        <fullName evidence="1">Orotidine 5'-phosphate decarboxylase</fullName>
        <ecNumber evidence="1">4.1.1.23</ecNumber>
    </recommendedName>
    <alternativeName>
        <fullName evidence="1">OMP decarboxylase</fullName>
        <shortName evidence="1">OMPDCase</shortName>
        <shortName evidence="1">OMPdecase</shortName>
    </alternativeName>
</protein>
<comment type="function">
    <text evidence="1">Catalyzes the decarboxylation of orotidine 5'-monophosphate (OMP) to uridine 5'-monophosphate (UMP).</text>
</comment>
<comment type="catalytic activity">
    <reaction evidence="1">
        <text>orotidine 5'-phosphate + H(+) = UMP + CO2</text>
        <dbReference type="Rhea" id="RHEA:11596"/>
        <dbReference type="ChEBI" id="CHEBI:15378"/>
        <dbReference type="ChEBI" id="CHEBI:16526"/>
        <dbReference type="ChEBI" id="CHEBI:57538"/>
        <dbReference type="ChEBI" id="CHEBI:57865"/>
        <dbReference type="EC" id="4.1.1.23"/>
    </reaction>
</comment>
<comment type="pathway">
    <text evidence="1">Pyrimidine metabolism; UMP biosynthesis via de novo pathway; UMP from orotate: step 2/2.</text>
</comment>
<comment type="subunit">
    <text evidence="1">Homodimer.</text>
</comment>
<comment type="similarity">
    <text evidence="1">Belongs to the OMP decarboxylase family. Type 1 subfamily.</text>
</comment>
<dbReference type="EC" id="4.1.1.23" evidence="1"/>
<dbReference type="EMBL" id="CP001340">
    <property type="protein sequence ID" value="ACL93571.1"/>
    <property type="molecule type" value="Genomic_DNA"/>
</dbReference>
<dbReference type="RefSeq" id="WP_010917994.1">
    <property type="nucleotide sequence ID" value="NC_011916.1"/>
</dbReference>
<dbReference type="RefSeq" id="YP_002515479.1">
    <property type="nucleotide sequence ID" value="NC_011916.1"/>
</dbReference>
<dbReference type="SMR" id="B8GXJ5"/>
<dbReference type="GeneID" id="7332358"/>
<dbReference type="KEGG" id="ccs:CCNA_00104"/>
<dbReference type="PATRIC" id="fig|565050.3.peg.103"/>
<dbReference type="HOGENOM" id="CLU_067069_1_0_5"/>
<dbReference type="OrthoDB" id="9806203at2"/>
<dbReference type="PhylomeDB" id="B8GXJ5"/>
<dbReference type="UniPathway" id="UPA00070">
    <property type="reaction ID" value="UER00120"/>
</dbReference>
<dbReference type="Proteomes" id="UP000001364">
    <property type="component" value="Chromosome"/>
</dbReference>
<dbReference type="GO" id="GO:0005829">
    <property type="term" value="C:cytosol"/>
    <property type="evidence" value="ECO:0007669"/>
    <property type="project" value="TreeGrafter"/>
</dbReference>
<dbReference type="GO" id="GO:0004590">
    <property type="term" value="F:orotidine-5'-phosphate decarboxylase activity"/>
    <property type="evidence" value="ECO:0007669"/>
    <property type="project" value="UniProtKB-UniRule"/>
</dbReference>
<dbReference type="GO" id="GO:0006207">
    <property type="term" value="P:'de novo' pyrimidine nucleobase biosynthetic process"/>
    <property type="evidence" value="ECO:0007669"/>
    <property type="project" value="InterPro"/>
</dbReference>
<dbReference type="GO" id="GO:0044205">
    <property type="term" value="P:'de novo' UMP biosynthetic process"/>
    <property type="evidence" value="ECO:0007669"/>
    <property type="project" value="UniProtKB-UniRule"/>
</dbReference>
<dbReference type="CDD" id="cd04725">
    <property type="entry name" value="OMP_decarboxylase_like"/>
    <property type="match status" value="1"/>
</dbReference>
<dbReference type="Gene3D" id="3.20.20.70">
    <property type="entry name" value="Aldolase class I"/>
    <property type="match status" value="1"/>
</dbReference>
<dbReference type="HAMAP" id="MF_01200_B">
    <property type="entry name" value="OMPdecase_type1_B"/>
    <property type="match status" value="1"/>
</dbReference>
<dbReference type="InterPro" id="IPR013785">
    <property type="entry name" value="Aldolase_TIM"/>
</dbReference>
<dbReference type="InterPro" id="IPR014732">
    <property type="entry name" value="OMPdecase"/>
</dbReference>
<dbReference type="InterPro" id="IPR018089">
    <property type="entry name" value="OMPdecase_AS"/>
</dbReference>
<dbReference type="InterPro" id="IPR047596">
    <property type="entry name" value="OMPdecase_bac"/>
</dbReference>
<dbReference type="InterPro" id="IPR001754">
    <property type="entry name" value="OMPdeCOase_dom"/>
</dbReference>
<dbReference type="InterPro" id="IPR011060">
    <property type="entry name" value="RibuloseP-bd_barrel"/>
</dbReference>
<dbReference type="NCBIfam" id="NF001273">
    <property type="entry name" value="PRK00230.1"/>
    <property type="match status" value="1"/>
</dbReference>
<dbReference type="NCBIfam" id="TIGR01740">
    <property type="entry name" value="pyrF"/>
    <property type="match status" value="1"/>
</dbReference>
<dbReference type="PANTHER" id="PTHR32119">
    <property type="entry name" value="OROTIDINE 5'-PHOSPHATE DECARBOXYLASE"/>
    <property type="match status" value="1"/>
</dbReference>
<dbReference type="PANTHER" id="PTHR32119:SF2">
    <property type="entry name" value="OROTIDINE 5'-PHOSPHATE DECARBOXYLASE"/>
    <property type="match status" value="1"/>
</dbReference>
<dbReference type="Pfam" id="PF00215">
    <property type="entry name" value="OMPdecase"/>
    <property type="match status" value="1"/>
</dbReference>
<dbReference type="SMART" id="SM00934">
    <property type="entry name" value="OMPdecase"/>
    <property type="match status" value="1"/>
</dbReference>
<dbReference type="SUPFAM" id="SSF51366">
    <property type="entry name" value="Ribulose-phoshate binding barrel"/>
    <property type="match status" value="1"/>
</dbReference>
<dbReference type="PROSITE" id="PS00156">
    <property type="entry name" value="OMPDECASE"/>
    <property type="match status" value="1"/>
</dbReference>
<feature type="chain" id="PRO_1000164565" description="Orotidine 5'-phosphate decarboxylase">
    <location>
        <begin position="1"/>
        <end position="233"/>
    </location>
</feature>
<feature type="active site" description="Proton donor" evidence="1">
    <location>
        <position position="63"/>
    </location>
</feature>
<feature type="binding site" evidence="1">
    <location>
        <position position="12"/>
    </location>
    <ligand>
        <name>substrate</name>
    </ligand>
</feature>
<feature type="binding site" evidence="1">
    <location>
        <position position="34"/>
    </location>
    <ligand>
        <name>substrate</name>
    </ligand>
</feature>
<feature type="binding site" evidence="1">
    <location>
        <begin position="61"/>
        <end position="70"/>
    </location>
    <ligand>
        <name>substrate</name>
    </ligand>
</feature>
<feature type="binding site" evidence="1">
    <location>
        <position position="116"/>
    </location>
    <ligand>
        <name>substrate</name>
    </ligand>
</feature>
<feature type="binding site" evidence="1">
    <location>
        <position position="181"/>
    </location>
    <ligand>
        <name>substrate</name>
    </ligand>
</feature>
<feature type="binding site" evidence="1">
    <location>
        <position position="190"/>
    </location>
    <ligand>
        <name>substrate</name>
    </ligand>
</feature>
<feature type="binding site" evidence="1">
    <location>
        <position position="210"/>
    </location>
    <ligand>
        <name>substrate</name>
    </ligand>
</feature>
<feature type="binding site" evidence="1">
    <location>
        <position position="211"/>
    </location>
    <ligand>
        <name>substrate</name>
    </ligand>
</feature>